<keyword id="KW-0002">3D-structure</keyword>
<keyword id="KW-1015">Disulfide bond</keyword>
<keyword id="KW-1170">Fusion of virus membrane with host endosomal membrane</keyword>
<keyword id="KW-1168">Fusion of virus membrane with host membrane</keyword>
<keyword id="KW-0325">Glycoprotein</keyword>
<keyword id="KW-1032">Host cell membrane</keyword>
<keyword id="KW-1038">Host endoplasmic reticulum</keyword>
<keyword id="KW-1040">Host Golgi apparatus</keyword>
<keyword id="KW-1043">Host membrane</keyword>
<keyword id="KW-0945">Host-virus interaction</keyword>
<keyword id="KW-0449">Lipoprotein</keyword>
<keyword id="KW-0472">Membrane</keyword>
<keyword id="KW-0479">Metal-binding</keyword>
<keyword id="KW-0519">Myristate</keyword>
<keyword id="KW-0812">Transmembrane</keyword>
<keyword id="KW-1133">Transmembrane helix</keyword>
<keyword id="KW-1161">Viral attachment to host cell</keyword>
<keyword id="KW-0261">Viral envelope protein</keyword>
<keyword id="KW-1162">Viral penetration into host cytoplasm</keyword>
<keyword id="KW-0946">Virion</keyword>
<keyword id="KW-1164">Virus endocytosis by host</keyword>
<keyword id="KW-1160">Virus entry into host cell</keyword>
<keyword id="KW-0862">Zinc</keyword>
<evidence type="ECO:0000250" key="1">
    <source>
        <dbReference type="UniProtKB" id="P26313"/>
    </source>
</evidence>
<evidence type="ECO:0000255" key="2">
    <source>
        <dbReference type="HAMAP-Rule" id="MF_04084"/>
    </source>
</evidence>
<evidence type="ECO:0000269" key="3">
    <source>
    </source>
</evidence>
<evidence type="ECO:0000269" key="4">
    <source>
    </source>
</evidence>
<evidence type="ECO:0000269" key="5">
    <source>
    </source>
</evidence>
<evidence type="ECO:0000305" key="6"/>
<evidence type="ECO:0007829" key="7">
    <source>
        <dbReference type="PDB" id="3MKO"/>
    </source>
</evidence>
<evidence type="ECO:0007829" key="8">
    <source>
        <dbReference type="PDB" id="5INE"/>
    </source>
</evidence>
<proteinExistence type="evidence at protein level"/>
<gene>
    <name evidence="2" type="primary">GPC</name>
    <name type="synonym">GP-C</name>
</gene>
<feature type="initiator methionine" description="Removed; by host" evidence="2">
    <location>
        <position position="1"/>
    </location>
</feature>
<feature type="chain" id="PRO_0000353858" description="Pre-glycoprotein polyprotein GP complex" evidence="2">
    <location>
        <begin position="2"/>
        <end position="498"/>
    </location>
</feature>
<feature type="chain" id="PRO_0000353859" description="Stable signal peptide" evidence="2">
    <location>
        <begin position="2"/>
        <end position="58"/>
    </location>
</feature>
<feature type="chain" id="PRO_0000036605" description="Glycoprotein G1" evidence="2">
    <location>
        <begin position="59"/>
        <end position="265"/>
    </location>
</feature>
<feature type="chain" id="PRO_0000036606" description="Glycoprotein G2" evidence="2">
    <location>
        <begin position="266"/>
        <end position="498"/>
    </location>
</feature>
<feature type="topological domain" description="Extracellular" evidence="2">
    <location>
        <begin position="2"/>
        <end position="17"/>
    </location>
</feature>
<feature type="transmembrane region" description="Helical" evidence="2">
    <location>
        <begin position="18"/>
        <end position="33"/>
    </location>
</feature>
<feature type="topological domain" description="Cytoplasmic" evidence="2">
    <location>
        <begin position="34"/>
        <end position="58"/>
    </location>
</feature>
<feature type="topological domain" description="Extracellular" evidence="2">
    <location>
        <begin position="59"/>
        <end position="438"/>
    </location>
</feature>
<feature type="transmembrane region" description="Helical" evidence="2">
    <location>
        <begin position="439"/>
        <end position="459"/>
    </location>
</feature>
<feature type="topological domain" description="Cytoplasmic" evidence="2">
    <location>
        <begin position="460"/>
        <end position="498"/>
    </location>
</feature>
<feature type="binding site" evidence="2">
    <location>
        <position position="57"/>
    </location>
    <ligand>
        <name>Zn(2+)</name>
        <dbReference type="ChEBI" id="CHEBI:29105"/>
        <label>1</label>
    </ligand>
</feature>
<feature type="binding site" evidence="2">
    <location>
        <position position="461"/>
    </location>
    <ligand>
        <name>Zn(2+)</name>
        <dbReference type="ChEBI" id="CHEBI:29105"/>
        <label>2</label>
    </ligand>
</feature>
<feature type="binding site" evidence="2">
    <location>
        <position position="463"/>
    </location>
    <ligand>
        <name>Zn(2+)</name>
        <dbReference type="ChEBI" id="CHEBI:29105"/>
        <label>2</label>
    </ligand>
</feature>
<feature type="binding site" evidence="2">
    <location>
        <position position="469"/>
    </location>
    <ligand>
        <name>Zn(2+)</name>
        <dbReference type="ChEBI" id="CHEBI:29105"/>
        <label>2</label>
    </ligand>
</feature>
<feature type="binding site" evidence="2">
    <location>
        <position position="473"/>
    </location>
    <ligand>
        <name>Zn(2+)</name>
        <dbReference type="ChEBI" id="CHEBI:29105"/>
        <label>1</label>
    </ligand>
</feature>
<feature type="binding site" evidence="2">
    <location>
        <position position="481"/>
    </location>
    <ligand>
        <name>Zn(2+)</name>
        <dbReference type="ChEBI" id="CHEBI:29105"/>
        <label>1</label>
    </ligand>
</feature>
<feature type="binding site" evidence="2">
    <location>
        <position position="483"/>
    </location>
    <ligand>
        <name>Zn(2+)</name>
        <dbReference type="ChEBI" id="CHEBI:29105"/>
        <label>1</label>
    </ligand>
</feature>
<feature type="site" description="Important for GP-C-mediated membrane fusion" evidence="1">
    <location>
        <position position="33"/>
    </location>
</feature>
<feature type="site" description="Cleavage; by host signal peptidase" evidence="2">
    <location>
        <begin position="58"/>
        <end position="59"/>
    </location>
</feature>
<feature type="site" description="Cleavage; by host MBTPS1" evidence="2">
    <location>
        <begin position="265"/>
        <end position="266"/>
    </location>
</feature>
<feature type="lipid moiety-binding region" description="N-myristoyl glycine; by host" evidence="2">
    <location>
        <position position="2"/>
    </location>
</feature>
<feature type="glycosylation site" description="N-linked (GlcNAc...) asparagine; by host" evidence="2 4">
    <location>
        <position position="85"/>
    </location>
</feature>
<feature type="glycosylation site" description="N-linked (GlcNAc...) asparagine; by host" evidence="2 4">
    <location>
        <position position="95"/>
    </location>
</feature>
<feature type="glycosylation site" description="N-linked (GlcNAc...) asparagine; by host" evidence="2 4">
    <location>
        <position position="114"/>
    </location>
</feature>
<feature type="glycosylation site" description="N-linked (GlcNAc...) asparagine; by host" evidence="2 4">
    <location>
        <position position="124"/>
    </location>
</feature>
<feature type="glycosylation site" description="N-linked (GlcNAc...) asparagine; by host" evidence="2 4">
    <location>
        <position position="171"/>
    </location>
</feature>
<feature type="glycosylation site" description="N-linked (GlcNAc...) asparagine; by host" evidence="2 4">
    <location>
        <position position="232"/>
    </location>
</feature>
<feature type="glycosylation site" description="N-linked (GlcNAc...) asparagine; by host" evidence="2 4">
    <location>
        <position position="371"/>
    </location>
</feature>
<feature type="glycosylation site" description="N-linked (GlcNAc...) asparagine; by host" evidence="2 4">
    <location>
        <position position="396"/>
    </location>
</feature>
<feature type="glycosylation site" description="N-linked (GlcNAc...) asparagine; by host" evidence="2 4">
    <location>
        <position position="401"/>
    </location>
</feature>
<feature type="disulfide bond" evidence="2">
    <location>
        <begin position="92"/>
        <end position="239"/>
    </location>
</feature>
<feature type="disulfide bond" evidence="2">
    <location>
        <begin position="123"/>
        <end position="160"/>
    </location>
</feature>
<feature type="disulfide bond" evidence="2">
    <location>
        <begin position="184"/>
        <end position="220"/>
    </location>
</feature>
<feature type="disulfide bond" evidence="2">
    <location>
        <begin position="285"/>
        <end position="298"/>
    </location>
</feature>
<feature type="disulfide bond" evidence="2">
    <location>
        <begin position="307"/>
        <end position="316"/>
    </location>
</feature>
<feature type="disulfide bond" evidence="2 3">
    <location>
        <begin position="370"/>
        <end position="391"/>
    </location>
</feature>
<feature type="mutagenesis site" description="Decreased amount of processed GPC." evidence="5">
    <original>I</original>
    <variation>F</variation>
    <location>
        <position position="322"/>
    </location>
</feature>
<feature type="sequence conflict" description="In Ref. 2; CAC01231." evidence="6" ref="2">
    <original>V</original>
    <variation>A</variation>
    <location>
        <position position="94"/>
    </location>
</feature>
<feature type="sequence conflict" description="In Ref. 2; CAC01231." evidence="6" ref="2">
    <original>P</original>
    <variation>L</variation>
    <location>
        <position position="110"/>
    </location>
</feature>
<feature type="sequence conflict" description="In Ref. 2; CAC01231." evidence="6" ref="2">
    <original>LNKKS</original>
    <variation>FNKKT</variation>
    <location>
        <begin position="129"/>
        <end position="133"/>
    </location>
</feature>
<feature type="sequence conflict" description="In Ref. 2; CAC01231." evidence="6" ref="2">
    <original>Y</original>
    <variation>H</variation>
    <location>
        <position position="155"/>
    </location>
</feature>
<feature type="sequence conflict" description="In Ref. 2; CAC01231." evidence="6" ref="2">
    <original>S</original>
    <variation>F</variation>
    <location>
        <position position="174"/>
    </location>
</feature>
<feature type="sequence conflict" description="In Ref. 2; CAC01231." evidence="6" ref="2">
    <original>M</original>
    <variation>I</variation>
    <location>
        <position position="181"/>
    </location>
</feature>
<feature type="sequence conflict" description="In Ref. 2; CAC01231." evidence="6" ref="2">
    <original>T</original>
    <variation>A</variation>
    <location>
        <position position="211"/>
    </location>
</feature>
<feature type="sequence conflict" description="In Ref. 2; CAC01231." evidence="6" ref="2">
    <original>S</original>
    <variation>A</variation>
    <location>
        <position position="265"/>
    </location>
</feature>
<feature type="sequence conflict" description="In Ref. 2; CAC01231." evidence="6" ref="2">
    <original>L</original>
    <variation>V</variation>
    <location>
        <position position="347"/>
    </location>
</feature>
<feature type="sequence conflict" description="In Ref. 2; CAC01231." evidence="6" ref="2">
    <original>FVR</original>
    <variation>LVK</variation>
    <location>
        <begin position="455"/>
        <end position="457"/>
    </location>
</feature>
<feature type="strand" evidence="8">
    <location>
        <begin position="65"/>
        <end position="68"/>
    </location>
</feature>
<feature type="turn" evidence="8">
    <location>
        <begin position="69"/>
        <end position="71"/>
    </location>
</feature>
<feature type="strand" evidence="8">
    <location>
        <begin position="72"/>
        <end position="79"/>
    </location>
</feature>
<feature type="helix" evidence="8">
    <location>
        <begin position="81"/>
        <end position="84"/>
    </location>
</feature>
<feature type="strand" evidence="8">
    <location>
        <begin position="85"/>
        <end position="88"/>
    </location>
</feature>
<feature type="strand" evidence="8">
    <location>
        <begin position="90"/>
        <end position="93"/>
    </location>
</feature>
<feature type="strand" evidence="8">
    <location>
        <begin position="95"/>
        <end position="103"/>
    </location>
</feature>
<feature type="strand" evidence="8">
    <location>
        <begin position="106"/>
        <end position="115"/>
    </location>
</feature>
<feature type="helix" evidence="8">
    <location>
        <begin position="126"/>
        <end position="130"/>
    </location>
</feature>
<feature type="helix" evidence="8">
    <location>
        <begin position="136"/>
        <end position="147"/>
    </location>
</feature>
<feature type="turn" evidence="8">
    <location>
        <begin position="155"/>
        <end position="157"/>
    </location>
</feature>
<feature type="strand" evidence="8">
    <location>
        <begin position="158"/>
        <end position="161"/>
    </location>
</feature>
<feature type="strand" evidence="8">
    <location>
        <begin position="167"/>
        <end position="171"/>
    </location>
</feature>
<feature type="helix" evidence="8">
    <location>
        <begin position="187"/>
        <end position="199"/>
    </location>
</feature>
<feature type="strand" evidence="8">
    <location>
        <begin position="226"/>
        <end position="232"/>
    </location>
</feature>
<feature type="helix" evidence="8">
    <location>
        <begin position="245"/>
        <end position="251"/>
    </location>
</feature>
<feature type="helix" evidence="8">
    <location>
        <begin position="254"/>
        <end position="257"/>
    </location>
</feature>
<feature type="helix" evidence="8">
    <location>
        <begin position="273"/>
        <end position="276"/>
    </location>
</feature>
<feature type="strand" evidence="8">
    <location>
        <begin position="277"/>
        <end position="280"/>
    </location>
</feature>
<feature type="strand" evidence="8">
    <location>
        <begin position="282"/>
        <end position="286"/>
    </location>
</feature>
<feature type="turn" evidence="8">
    <location>
        <begin position="288"/>
        <end position="290"/>
    </location>
</feature>
<feature type="strand" evidence="8">
    <location>
        <begin position="291"/>
        <end position="295"/>
    </location>
</feature>
<feature type="strand" evidence="8">
    <location>
        <begin position="297"/>
        <end position="299"/>
    </location>
</feature>
<feature type="helix" evidence="8">
    <location>
        <begin position="302"/>
        <end position="309"/>
    </location>
</feature>
<feature type="helix" evidence="7">
    <location>
        <begin position="314"/>
        <end position="359"/>
    </location>
</feature>
<feature type="helix" evidence="7">
    <location>
        <begin position="362"/>
        <end position="364"/>
    </location>
</feature>
<feature type="helix" evidence="7">
    <location>
        <begin position="374"/>
        <end position="380"/>
    </location>
</feature>
<feature type="turn" evidence="8">
    <location>
        <begin position="381"/>
        <end position="383"/>
    </location>
</feature>
<feature type="strand" evidence="8">
    <location>
        <begin position="396"/>
        <end position="399"/>
    </location>
</feature>
<feature type="turn" evidence="8">
    <location>
        <begin position="402"/>
        <end position="404"/>
    </location>
</feature>
<feature type="helix" evidence="7">
    <location>
        <begin position="408"/>
        <end position="420"/>
    </location>
</feature>
<organismHost>
    <name type="scientific">Homo sapiens</name>
    <name type="common">Human</name>
    <dbReference type="NCBI Taxonomy" id="9606"/>
</organismHost>
<organismHost>
    <name type="scientific">Mesocricetus auratus</name>
    <name type="common">Golden hamster</name>
    <dbReference type="NCBI Taxonomy" id="10036"/>
</organismHost>
<organismHost>
    <name type="scientific">Mus musculus</name>
    <name type="common">Mouse</name>
    <dbReference type="NCBI Taxonomy" id="10090"/>
</organismHost>
<dbReference type="EMBL" id="M22138">
    <property type="protein sequence ID" value="AAA46265.1"/>
    <property type="molecule type" value="Genomic_RNA"/>
</dbReference>
<dbReference type="EMBL" id="AJ297484">
    <property type="protein sequence ID" value="CAC01231.1"/>
    <property type="molecule type" value="mRNA"/>
</dbReference>
<dbReference type="PIR" id="A23481">
    <property type="entry name" value="VGXPLC"/>
</dbReference>
<dbReference type="PDB" id="1S7Q">
    <property type="method" value="X-ray"/>
    <property type="resolution" value="1.99 A"/>
    <property type="chains" value="C=33-41"/>
</dbReference>
<dbReference type="PDB" id="1S7R">
    <property type="method" value="X-ray"/>
    <property type="resolution" value="2.95 A"/>
    <property type="chains" value="C/F=33-41"/>
</dbReference>
<dbReference type="PDB" id="1S7S">
    <property type="method" value="X-ray"/>
    <property type="resolution" value="1.99 A"/>
    <property type="chains" value="C=33-41"/>
</dbReference>
<dbReference type="PDB" id="1S7T">
    <property type="method" value="X-ray"/>
    <property type="resolution" value="2.30 A"/>
    <property type="chains" value="C/F=33-41"/>
</dbReference>
<dbReference type="PDB" id="1S7U">
    <property type="method" value="X-ray"/>
    <property type="resolution" value="2.20 A"/>
    <property type="chains" value="C/F/I/L=33-41"/>
</dbReference>
<dbReference type="PDB" id="1S7V">
    <property type="method" value="X-ray"/>
    <property type="resolution" value="2.20 A"/>
    <property type="chains" value="C/F=33-41"/>
</dbReference>
<dbReference type="PDB" id="1S7W">
    <property type="method" value="X-ray"/>
    <property type="resolution" value="2.40 A"/>
    <property type="chains" value="C/F/I/L=33-41"/>
</dbReference>
<dbReference type="PDB" id="1S7X">
    <property type="method" value="X-ray"/>
    <property type="resolution" value="2.41 A"/>
    <property type="chains" value="C/F/I/L=33-41"/>
</dbReference>
<dbReference type="PDB" id="3MKO">
    <property type="method" value="X-ray"/>
    <property type="resolution" value="1.80 A"/>
    <property type="chains" value="A=310-438"/>
</dbReference>
<dbReference type="PDB" id="3QUK">
    <property type="method" value="X-ray"/>
    <property type="resolution" value="2.41 A"/>
    <property type="chains" value="C/F=33-41"/>
</dbReference>
<dbReference type="PDB" id="3QUL">
    <property type="method" value="X-ray"/>
    <property type="resolution" value="2.00 A"/>
    <property type="chains" value="C/F/I/L=33-41"/>
</dbReference>
<dbReference type="PDB" id="3ROL">
    <property type="method" value="X-ray"/>
    <property type="resolution" value="2.60 A"/>
    <property type="chains" value="E/F=34-41"/>
</dbReference>
<dbReference type="PDB" id="3ROO">
    <property type="method" value="X-ray"/>
    <property type="resolution" value="2.00 A"/>
    <property type="chains" value="E/F=34-41"/>
</dbReference>
<dbReference type="PDB" id="3TBS">
    <property type="method" value="X-ray"/>
    <property type="resolution" value="2.49 A"/>
    <property type="chains" value="C/F=33-41"/>
</dbReference>
<dbReference type="PDB" id="3TBT">
    <property type="method" value="X-ray"/>
    <property type="resolution" value="2.30 A"/>
    <property type="chains" value="C/F/I/L=33-41"/>
</dbReference>
<dbReference type="PDB" id="3TBV">
    <property type="method" value="X-ray"/>
    <property type="resolution" value="2.10 A"/>
    <property type="chains" value="I/J/K/L=33-41"/>
</dbReference>
<dbReference type="PDB" id="3TBW">
    <property type="method" value="X-ray"/>
    <property type="resolution" value="2.15 A"/>
    <property type="chains" value="I/J/K/L=33-41"/>
</dbReference>
<dbReference type="PDB" id="3TBY">
    <property type="method" value="X-ray"/>
    <property type="resolution" value="2.50 A"/>
    <property type="chains" value="C/F/I/L=1-9"/>
</dbReference>
<dbReference type="PDB" id="4NSK">
    <property type="method" value="X-ray"/>
    <property type="resolution" value="2.60 A"/>
    <property type="chains" value="C=33-40"/>
</dbReference>
<dbReference type="PDB" id="5INE">
    <property type="method" value="X-ray"/>
    <property type="resolution" value="3.50 A"/>
    <property type="chains" value="A/B=1-438"/>
</dbReference>
<dbReference type="PDBsum" id="1S7Q"/>
<dbReference type="PDBsum" id="1S7R"/>
<dbReference type="PDBsum" id="1S7S"/>
<dbReference type="PDBsum" id="1S7T"/>
<dbReference type="PDBsum" id="1S7U"/>
<dbReference type="PDBsum" id="1S7V"/>
<dbReference type="PDBsum" id="1S7W"/>
<dbReference type="PDBsum" id="1S7X"/>
<dbReference type="PDBsum" id="3MKO"/>
<dbReference type="PDBsum" id="3QUK"/>
<dbReference type="PDBsum" id="3QUL"/>
<dbReference type="PDBsum" id="3ROL"/>
<dbReference type="PDBsum" id="3ROO"/>
<dbReference type="PDBsum" id="3TBS"/>
<dbReference type="PDBsum" id="3TBT"/>
<dbReference type="PDBsum" id="3TBV"/>
<dbReference type="PDBsum" id="3TBW"/>
<dbReference type="PDBsum" id="3TBY"/>
<dbReference type="PDBsum" id="4NSK"/>
<dbReference type="PDBsum" id="5INE"/>
<dbReference type="SMR" id="P07399"/>
<dbReference type="DIP" id="DIP-59722N"/>
<dbReference type="GlyCosmos" id="P07399">
    <property type="glycosylation" value="9 sites, No reported glycans"/>
</dbReference>
<dbReference type="iPTMnet" id="P07399"/>
<dbReference type="EvolutionaryTrace" id="P07399"/>
<dbReference type="GO" id="GO:0044167">
    <property type="term" value="C:host cell endoplasmic reticulum membrane"/>
    <property type="evidence" value="ECO:0007669"/>
    <property type="project" value="UniProtKB-SubCell"/>
</dbReference>
<dbReference type="GO" id="GO:0044178">
    <property type="term" value="C:host cell Golgi membrane"/>
    <property type="evidence" value="ECO:0007669"/>
    <property type="project" value="UniProtKB-SubCell"/>
</dbReference>
<dbReference type="GO" id="GO:0020002">
    <property type="term" value="C:host cell plasma membrane"/>
    <property type="evidence" value="ECO:0007669"/>
    <property type="project" value="UniProtKB-SubCell"/>
</dbReference>
<dbReference type="GO" id="GO:0016020">
    <property type="term" value="C:membrane"/>
    <property type="evidence" value="ECO:0007669"/>
    <property type="project" value="UniProtKB-UniRule"/>
</dbReference>
<dbReference type="GO" id="GO:0019031">
    <property type="term" value="C:viral envelope"/>
    <property type="evidence" value="ECO:0007669"/>
    <property type="project" value="UniProtKB-UniRule"/>
</dbReference>
<dbReference type="GO" id="GO:0055036">
    <property type="term" value="C:virion membrane"/>
    <property type="evidence" value="ECO:0007669"/>
    <property type="project" value="UniProtKB-SubCell"/>
</dbReference>
<dbReference type="GO" id="GO:0046872">
    <property type="term" value="F:metal ion binding"/>
    <property type="evidence" value="ECO:0007669"/>
    <property type="project" value="UniProtKB-KW"/>
</dbReference>
<dbReference type="GO" id="GO:0039654">
    <property type="term" value="P:fusion of virus membrane with host endosome membrane"/>
    <property type="evidence" value="ECO:0007669"/>
    <property type="project" value="UniProtKB-UniRule"/>
</dbReference>
<dbReference type="GO" id="GO:0019065">
    <property type="term" value="P:receptor-mediated endocytosis of virus by host cell"/>
    <property type="evidence" value="ECO:0007669"/>
    <property type="project" value="UniProtKB-UniRule"/>
</dbReference>
<dbReference type="GO" id="GO:0019062">
    <property type="term" value="P:virion attachment to host cell"/>
    <property type="evidence" value="ECO:0007669"/>
    <property type="project" value="UniProtKB-UniRule"/>
</dbReference>
<dbReference type="Gene3D" id="6.10.140.1590">
    <property type="match status" value="1"/>
</dbReference>
<dbReference type="Gene3D" id="2.20.28.180">
    <property type="entry name" value="Arenavirus glycoprotein, zinc binding domain"/>
    <property type="match status" value="1"/>
</dbReference>
<dbReference type="HAMAP" id="MF_04084">
    <property type="entry name" value="ARENA_GPC"/>
    <property type="match status" value="1"/>
</dbReference>
<dbReference type="InterPro" id="IPR001535">
    <property type="entry name" value="Arena_glycoprot"/>
</dbReference>
<dbReference type="InterPro" id="IPR043015">
    <property type="entry name" value="Arena_glycoprot_zinc-bd"/>
</dbReference>
<dbReference type="Pfam" id="PF00798">
    <property type="entry name" value="Arena_glycoprot"/>
    <property type="match status" value="1"/>
</dbReference>
<dbReference type="PIRSF" id="PIRSF004028">
    <property type="entry name" value="GPC_ArenaV"/>
    <property type="match status" value="1"/>
</dbReference>
<accession>P07399</accession>
<accession>Q9ICW1</accession>
<protein>
    <recommendedName>
        <fullName evidence="2">Pre-glycoprotein polyprotein GP complex</fullName>
        <shortName evidence="2">Pre-GP-C</shortName>
    </recommendedName>
    <component>
        <recommendedName>
            <fullName evidence="2">Stable signal peptide</fullName>
            <shortName evidence="2">SSP</shortName>
        </recommendedName>
    </component>
    <component>
        <recommendedName>
            <fullName evidence="2">Glycoprotein G1</fullName>
            <shortName evidence="2">GP1</shortName>
        </recommendedName>
    </component>
    <component>
        <recommendedName>
            <fullName evidence="2">Glycoprotein G2</fullName>
            <shortName evidence="2">GP2</shortName>
        </recommendedName>
    </component>
</protein>
<sequence>MGQIVTMFEALPHIIDEVINIVIIVLIIITSIKAVYNFATCGILALVSFLFLAGRSCGMYGLNGPDIYKGVYQFKSVEFDMSHLNLTMPNACSVNNSHHYISMGSSGLEPTFTNDSILNHNFCNLTSALNKKSFDHTLMSIVSSLHLSIRGNSNYKAVSCDFNNGITIQYNLSSSDPQSAMSQCRTFRGRVLDMFRTAFGGKYMRSGWGWTGSDGKTTWCSQTSYQYLIIQNRTWENHCRYAGPFGMSRILFAQEKTKFLTRRLSGTFTWTLSDSSGVENPGGYCLTKWMILAAELKCFGNTAVAKCNVNHDEEFCDMLRLIDYNKAALSKFKQDVESALHVFKTTLNSLISDQLLMRNHLRDLMGVPYCNYSKFWYLEHAKTGETSVPKCWLVTNGSYLNETHFSDQIEQEADNMITEMLRKDYIKRQGSTPLALMDLLMFSTSAYLISIFLHFVRIPTHRHIKGGSCPKPHRLTNKGICSCGAFKVPGVKTIWKRR</sequence>
<name>GLYC_LYCVW</name>
<reference key="1">
    <citation type="journal article" date="1985" name="Virus Res.">
        <title>Complete sequence of the S RNA of lymphocytic choriomeningitis virus (WE strain) compared to that of Pichinde arenavirus.</title>
        <authorList>
            <person name="Romanowski V."/>
            <person name="Matsuura Y."/>
            <person name="Bishop D.H.L."/>
        </authorList>
    </citation>
    <scope>NUCLEOTIDE SEQUENCE [GENOMIC RNA]</scope>
</reference>
<reference key="2">
    <citation type="journal article" date="2001" name="J. Virol.">
        <title>Recombinant expression of lymphocytic choriomeningitis virus strain WE glycoproteins: a single amino acid makes the difference.</title>
        <authorList>
            <person name="Beyer W."/>
            <person name="Miletic H."/>
            <person name="Ostertag W."/>
            <person name="von Laer D."/>
        </authorList>
    </citation>
    <scope>NUCLEOTIDE SEQUENCE [GENOMIC RNA]</scope>
</reference>
<reference key="3">
    <citation type="journal article" date="2019" name="J. Mol. Biol.">
        <title>Variations in Core Packing of GP2 from Old World Mammarenaviruses in their Post-Fusion Conformations Affect Membrane-Fusion Efficiencies.</title>
        <authorList>
            <person name="Shulman A."/>
            <person name="Katz M."/>
            <person name="Cohen-Dvashi H."/>
            <person name="Greenblatt H.M."/>
            <person name="Levy Y."/>
            <person name="Diskin R."/>
        </authorList>
    </citation>
    <scope>MUTAGENESIS OF ILE-322</scope>
</reference>
<reference key="4">
    <citation type="journal article" date="2004" name="J. Immunol.">
        <title>Determination of structural principles underlying three different modes of lymphocytic choriomeningitis virus escape from CTL recognition.</title>
        <authorList>
            <person name="Velloso L.M."/>
            <person name="Michaelsson J."/>
            <person name="Ljunggren H.G."/>
            <person name="Schneider G."/>
            <person name="Achour A."/>
        </authorList>
    </citation>
    <scope>X-RAY CRYSTALLOGRAPHY (1.99 ANGSTROMS) OF 33-40</scope>
</reference>
<reference evidence="7" key="5">
    <citation type="journal article" date="2011" name="Proc. Natl. Acad. Sci. U.S.A.">
        <title>X-ray structure of the arenavirus glycoprotein GP2 in its postfusion hairpin conformation.</title>
        <authorList>
            <person name="Igonet S."/>
            <person name="Vaney M.C."/>
            <person name="Vonrhein C."/>
            <person name="Vonhrein C."/>
            <person name="Bricogne G."/>
            <person name="Stura E.A."/>
            <person name="Hengartner H."/>
            <person name="Eschli B."/>
            <person name="Rey F.A."/>
        </authorList>
    </citation>
    <scope>X-RAY CRYSTALLOGRAPHY (1.80 ANGSTROMS) OF 312-438</scope>
    <scope>DISULFIDE BONDS</scope>
    <scope>SUBUNIT (GLYCOPROTEIN G2)</scope>
</reference>
<reference key="6">
    <citation type="journal article" date="2012" name="Eur. J. Immunol.">
        <title>Unexpected T-cell recognition of an altered peptide ligand is driven by reversed thermodynamics.</title>
        <authorList>
            <person name="Allerbring E.B."/>
            <person name="Duru A.D."/>
            <person name="Uchtenhagen H."/>
            <person name="Madhurantakam C."/>
            <person name="Tomek M.B."/>
            <person name="Grimm S."/>
            <person name="Mazumdar P.A."/>
            <person name="Friemann R."/>
            <person name="Uhlin M."/>
            <person name="Sandalova T."/>
            <person name="Nygren P.A."/>
            <person name="Achour A."/>
        </authorList>
    </citation>
    <scope>X-RAY CRYSTALLOGRAPHY (2.00 ANGSTROMS) OF 33-41</scope>
</reference>
<reference evidence="8" key="7">
    <citation type="journal article" date="2016" name="Nat. Struct. Mol. Biol.">
        <title>Crystal structure of the prefusion surface glycoprotein of the prototypic arenavirus LCMV.</title>
        <authorList>
            <person name="Hastie K.M."/>
            <person name="Igonet S."/>
            <person name="Sullivan B.M."/>
            <person name="Legrand P."/>
            <person name="Zandonatti M.A."/>
            <person name="Robinson J.E."/>
            <person name="Garry R.F."/>
            <person name="Rey F.A."/>
            <person name="Oldstone M.B."/>
            <person name="Saphire E.O."/>
        </authorList>
    </citation>
    <scope>X-RAY CRYSTALLOGRAPHY (3.50 ANGSTROMS) OF 1-438</scope>
    <scope>DISULFIDE BONDS</scope>
    <scope>GLYCOSYLATION AT ASN-85; ASN-95; ASN-114; ASN-124; ASN-171; ASN-232; ASN-371; ASN-396 AND ASN-401</scope>
    <scope>SUBUNIT (GLYCOPROTEIN G1)</scope>
    <scope>SUBUNIT (GLYCOPROTEIN G2)</scope>
    <scope>INTERACTION WITH HOST DAG1 (GLYCOPROTEIN G1)</scope>
</reference>
<comment type="function">
    <molecule>Stable signal peptide</molecule>
    <text evidence="2">Functions as a cleaved signal peptide that is retained as the third component of the GP complex (GP-C). Helps to stabilize the spike complex in its native conformation. The SSP is required for efficient glycoprotein expression, post-translational maturation cleavage of G1 and G2, glycoprotein transport to the cell surface plasma membrane, formation of infectious virus particles, and acid pH-dependent glycoprotein-mediated cell fusion.</text>
</comment>
<comment type="function">
    <molecule>Glycoprotein G1</molecule>
    <text evidence="2">Forms the virion spikes together with glycoprotein G2. The glycoprotein spike trimers are connected to the underlying matrix. Interacts with the host receptor. Mediates virus attachment to the host primary receptor alpha-dystroglycan DAG1 (alpha-DG) at the cell surface. Down-modulates host DAG1.</text>
</comment>
<comment type="function">
    <molecule>Glycoprotein G2</molecule>
    <text evidence="2">Forms the virion spikes together with glycoprotein G1. The glycoprotein spike trimers are connected to the underlying matrix. Class I viral fusion protein that directs fusion of viral and host endosomal membranes, leading to delivery of the nucleocapsid into the cytoplasm. Membrane fusion is mediated by irreversible conformational changes induced by acidification.</text>
</comment>
<comment type="subunit">
    <molecule>Stable signal peptide</molecule>
    <text evidence="2">Interacts with glycoprotein G2. Part of the GP complex (GP-C) together with glycoprotein G1 and glycoprotein G2. The GP-complex interacts with protein Z, which interacts with ribonucleocapsid; these interactions may induce virion budding.</text>
</comment>
<comment type="subunit">
    <molecule>Glycoprotein G1</molecule>
    <text evidence="2 4">Homotrimer; disulfide-linked. In pre-fusion state, G1 homotrimers bind G2 homotrimers via ionic interactions. Part of the GP complex (GP-C) together with glycoprotein G2 and the stable signal peptide (By similarity). Interacts with the primary host receptor DAG1 on the cell surface (PubMed:27111888). The GP-complex interacts with protein Z, which interacts with ribonucleocapsid; these interactions may induce virion budding (By similarity).</text>
</comment>
<comment type="subunit">
    <molecule>Glycoprotein G2</molecule>
    <text evidence="2 3 4">Homotrimer. Interacts with the stable signal peptide. In pre-fusion state, G2 homotrimers bind G1 homotrimers via ionic interactions (PubMed:27111888). Part of the GP complex (GP-C) together with glycoprotein G1 and the stable signal peptide (By similarity). Acidification in the endosome triggers rearrangements, which ultimately leads to a 6 helix bundle formed by the two heptad repeat domains (HR1 and HR2) in post-fusion state (PubMed:22123988). The GP-complex interacts with protein Z, which interacts with ribonucleocapsid; these interactions may induce virion budding (By similarity).</text>
</comment>
<comment type="subcellular location">
    <molecule>Stable signal peptide</molecule>
    <subcellularLocation>
        <location evidence="2">Virion membrane</location>
        <topology evidence="2">Single-pass type II membrane protein</topology>
    </subcellularLocation>
    <subcellularLocation>
        <location evidence="2">Host endoplasmic reticulum membrane</location>
        <topology evidence="2">Single-pass type II membrane protein</topology>
    </subcellularLocation>
    <subcellularLocation>
        <location evidence="2">Host Golgi apparatus membrane</location>
        <topology evidence="2">Single-pass type II membrane protein</topology>
    </subcellularLocation>
    <subcellularLocation>
        <location evidence="2">Host cell membrane</location>
        <topology evidence="2">Single-pass type II membrane protein</topology>
    </subcellularLocation>
</comment>
<comment type="subcellular location">
    <molecule>Glycoprotein G1</molecule>
    <subcellularLocation>
        <location evidence="2">Virion membrane</location>
        <topology evidence="2">Peripheral membrane protein</topology>
    </subcellularLocation>
    <subcellularLocation>
        <location evidence="2">Host endoplasmic reticulum membrane</location>
        <topology evidence="2">Peripheral membrane protein</topology>
    </subcellularLocation>
    <subcellularLocation>
        <location evidence="2">Host Golgi apparatus membrane</location>
        <topology evidence="2">Peripheral membrane protein</topology>
    </subcellularLocation>
    <subcellularLocation>
        <location evidence="2">Host cell membrane</location>
        <topology evidence="2">Peripheral membrane protein</topology>
    </subcellularLocation>
</comment>
<comment type="subcellular location">
    <molecule>Glycoprotein G2</molecule>
    <subcellularLocation>
        <location evidence="2">Virion membrane</location>
        <topology evidence="2">Single-pass membrane protein</topology>
    </subcellularLocation>
    <subcellularLocation>
        <location evidence="2">Host endoplasmic reticulum membrane</location>
        <topology evidence="2">Single-pass membrane protein</topology>
    </subcellularLocation>
    <subcellularLocation>
        <location evidence="2">Host Golgi apparatus membrane</location>
        <topology evidence="2">Single-pass membrane protein</topology>
    </subcellularLocation>
    <subcellularLocation>
        <location evidence="2">Host cell membrane</location>
        <topology evidence="2">Single-pass membrane protein</topology>
    </subcellularLocation>
    <text evidence="2">Binding to the stable signal peptide masks endogenous ER localization signals in the cytoplasmic domain of G2 to ensure that only the fully assembled, tripartite GP complex is transported for virion assembly.</text>
</comment>
<comment type="domain">
    <molecule>Stable signal peptide</molecule>
    <text evidence="2">The N-terminus is localized at the extracellular side of the GP-C, with a part embedded in the membrane probably.</text>
</comment>
<comment type="domain">
    <molecule>Glycoprotein G2</molecule>
    <text evidence="2">Contains 1 fusion peptide at the N-terminus, 2 heptad repeats domains HR1 and HR2 and, at the C-terminus, a cytoplasmic domain that plays a role in ER location. Also contains a zinc-binding domain that allows SSP retention in the GPC complex by accepting a cysteine from SSP as the fourth ligand.</text>
</comment>
<comment type="PTM">
    <molecule>Pre-glycoprotein polyprotein GP complex</molecule>
    <text evidence="2">Specific enzymatic cleavages in vivo yield mature proteins. GP-C polyprotein is cleaved in the endoplasmic reticulum by the host protease MBTPS1. Only cleaved glycoprotein is incorporated into virions.</text>
</comment>
<comment type="PTM">
    <molecule>Stable signal peptide</molecule>
    <text evidence="2">The SSP remains stably associated with the GP complex following cleavage by signal peptidase and plays crucial roles in the trafficking of GP through the secretory pathway.</text>
</comment>
<comment type="PTM">
    <molecule>Stable signal peptide</molecule>
    <text evidence="2">Myristoylation is necessary for GP2-mediated fusion activity.</text>
</comment>
<comment type="similarity">
    <text evidence="2">Belongs to the arenaviridae GPC protein family.</text>
</comment>
<organism>
    <name type="scientific">Lymphocytic choriomeningitis virus (strain WE)</name>
    <name type="common">LCMV</name>
    <dbReference type="NCBI Taxonomy" id="11627"/>
    <lineage>
        <taxon>Viruses</taxon>
        <taxon>Riboviria</taxon>
        <taxon>Orthornavirae</taxon>
        <taxon>Negarnaviricota</taxon>
        <taxon>Polyploviricotina</taxon>
        <taxon>Ellioviricetes</taxon>
        <taxon>Bunyavirales</taxon>
        <taxon>Arenaviridae</taxon>
        <taxon>Mammarenavirus</taxon>
        <taxon>Mammarenavirus choriomeningitidis</taxon>
    </lineage>
</organism>